<keyword id="KW-0012">Acyltransferase</keyword>
<keyword id="KW-0963">Cytoplasm</keyword>
<keyword id="KW-1185">Reference proteome</keyword>
<keyword id="KW-0808">Transferase</keyword>
<feature type="chain" id="PRO_0000258081" description="Leucyl/phenylalanyl-tRNA--protein transferase">
    <location>
        <begin position="1"/>
        <end position="268"/>
    </location>
</feature>
<sequence>MNNINDSSAIHITPETFVKQIRSLGRYNFPEPALVDPDGIGIVGIGGNLAPETLISAYAQGLFPWFNDDEPIAWWCPEPRCVMQPTDYQPSKSLRKQANNARWQLTLNQAFNEVIHACSLPRSNGLPEGEHTWIHDDMIEAYNELHAQGFAHSVEVWDDQGQLVGGLYGLKIGSIYFGESMFHIASNASKLAFWGLMRLCTQSNVTLVDCQLPNEHLMSLGAITLSRTEFLTQLDTLISNGSDAWHKNSHRPLAVSLLGNLQPWQLNP</sequence>
<accession>Q4FUQ3</accession>
<name>LFTR_PSYA2</name>
<gene>
    <name evidence="1" type="primary">aat</name>
    <name type="ordered locus">Psyc_0387</name>
</gene>
<evidence type="ECO:0000255" key="1">
    <source>
        <dbReference type="HAMAP-Rule" id="MF_00688"/>
    </source>
</evidence>
<organism>
    <name type="scientific">Psychrobacter arcticus (strain DSM 17307 / VKM B-2377 / 273-4)</name>
    <dbReference type="NCBI Taxonomy" id="259536"/>
    <lineage>
        <taxon>Bacteria</taxon>
        <taxon>Pseudomonadati</taxon>
        <taxon>Pseudomonadota</taxon>
        <taxon>Gammaproteobacteria</taxon>
        <taxon>Moraxellales</taxon>
        <taxon>Moraxellaceae</taxon>
        <taxon>Psychrobacter</taxon>
    </lineage>
</organism>
<protein>
    <recommendedName>
        <fullName evidence="1">Leucyl/phenylalanyl-tRNA--protein transferase</fullName>
        <ecNumber evidence="1">2.3.2.6</ecNumber>
    </recommendedName>
    <alternativeName>
        <fullName evidence="1">L/F-transferase</fullName>
    </alternativeName>
    <alternativeName>
        <fullName evidence="1">Leucyltransferase</fullName>
    </alternativeName>
    <alternativeName>
        <fullName evidence="1">Phenyalanyltransferase</fullName>
    </alternativeName>
</protein>
<proteinExistence type="inferred from homology"/>
<comment type="function">
    <text evidence="1">Functions in the N-end rule pathway of protein degradation where it conjugates Leu, Phe and, less efficiently, Met from aminoacyl-tRNAs to the N-termini of proteins containing an N-terminal arginine or lysine.</text>
</comment>
<comment type="catalytic activity">
    <reaction evidence="1">
        <text>N-terminal L-lysyl-[protein] + L-leucyl-tRNA(Leu) = N-terminal L-leucyl-L-lysyl-[protein] + tRNA(Leu) + H(+)</text>
        <dbReference type="Rhea" id="RHEA:12340"/>
        <dbReference type="Rhea" id="RHEA-COMP:9613"/>
        <dbReference type="Rhea" id="RHEA-COMP:9622"/>
        <dbReference type="Rhea" id="RHEA-COMP:12670"/>
        <dbReference type="Rhea" id="RHEA-COMP:12671"/>
        <dbReference type="ChEBI" id="CHEBI:15378"/>
        <dbReference type="ChEBI" id="CHEBI:65249"/>
        <dbReference type="ChEBI" id="CHEBI:78442"/>
        <dbReference type="ChEBI" id="CHEBI:78494"/>
        <dbReference type="ChEBI" id="CHEBI:133043"/>
        <dbReference type="EC" id="2.3.2.6"/>
    </reaction>
</comment>
<comment type="catalytic activity">
    <reaction evidence="1">
        <text>N-terminal L-arginyl-[protein] + L-leucyl-tRNA(Leu) = N-terminal L-leucyl-L-arginyl-[protein] + tRNA(Leu) + H(+)</text>
        <dbReference type="Rhea" id="RHEA:50416"/>
        <dbReference type="Rhea" id="RHEA-COMP:9613"/>
        <dbReference type="Rhea" id="RHEA-COMP:9622"/>
        <dbReference type="Rhea" id="RHEA-COMP:12672"/>
        <dbReference type="Rhea" id="RHEA-COMP:12673"/>
        <dbReference type="ChEBI" id="CHEBI:15378"/>
        <dbReference type="ChEBI" id="CHEBI:64719"/>
        <dbReference type="ChEBI" id="CHEBI:78442"/>
        <dbReference type="ChEBI" id="CHEBI:78494"/>
        <dbReference type="ChEBI" id="CHEBI:133044"/>
        <dbReference type="EC" id="2.3.2.6"/>
    </reaction>
</comment>
<comment type="catalytic activity">
    <reaction evidence="1">
        <text>L-phenylalanyl-tRNA(Phe) + an N-terminal L-alpha-aminoacyl-[protein] = an N-terminal L-phenylalanyl-L-alpha-aminoacyl-[protein] + tRNA(Phe)</text>
        <dbReference type="Rhea" id="RHEA:43632"/>
        <dbReference type="Rhea" id="RHEA-COMP:9668"/>
        <dbReference type="Rhea" id="RHEA-COMP:9699"/>
        <dbReference type="Rhea" id="RHEA-COMP:10636"/>
        <dbReference type="Rhea" id="RHEA-COMP:10637"/>
        <dbReference type="ChEBI" id="CHEBI:78442"/>
        <dbReference type="ChEBI" id="CHEBI:78531"/>
        <dbReference type="ChEBI" id="CHEBI:78597"/>
        <dbReference type="ChEBI" id="CHEBI:83561"/>
        <dbReference type="EC" id="2.3.2.6"/>
    </reaction>
</comment>
<comment type="subcellular location">
    <subcellularLocation>
        <location evidence="1">Cytoplasm</location>
    </subcellularLocation>
</comment>
<comment type="similarity">
    <text evidence="1">Belongs to the L/F-transferase family.</text>
</comment>
<dbReference type="EC" id="2.3.2.6" evidence="1"/>
<dbReference type="EMBL" id="CP000082">
    <property type="protein sequence ID" value="AAZ18255.1"/>
    <property type="molecule type" value="Genomic_DNA"/>
</dbReference>
<dbReference type="RefSeq" id="WP_011279693.1">
    <property type="nucleotide sequence ID" value="NC_007204.1"/>
</dbReference>
<dbReference type="SMR" id="Q4FUQ3"/>
<dbReference type="STRING" id="259536.Psyc_0387"/>
<dbReference type="DNASU" id="3513991"/>
<dbReference type="KEGG" id="par:Psyc_0387"/>
<dbReference type="eggNOG" id="COG2360">
    <property type="taxonomic scope" value="Bacteria"/>
</dbReference>
<dbReference type="HOGENOM" id="CLU_075045_0_0_6"/>
<dbReference type="OrthoDB" id="9790282at2"/>
<dbReference type="Proteomes" id="UP000000546">
    <property type="component" value="Chromosome"/>
</dbReference>
<dbReference type="GO" id="GO:0005737">
    <property type="term" value="C:cytoplasm"/>
    <property type="evidence" value="ECO:0007669"/>
    <property type="project" value="UniProtKB-SubCell"/>
</dbReference>
<dbReference type="GO" id="GO:0008914">
    <property type="term" value="F:leucyl-tRNA--protein transferase activity"/>
    <property type="evidence" value="ECO:0007669"/>
    <property type="project" value="UniProtKB-UniRule"/>
</dbReference>
<dbReference type="GO" id="GO:0030163">
    <property type="term" value="P:protein catabolic process"/>
    <property type="evidence" value="ECO:0007669"/>
    <property type="project" value="UniProtKB-UniRule"/>
</dbReference>
<dbReference type="Gene3D" id="3.40.630.70">
    <property type="entry name" value="Leucyl/phenylalanyl-tRNA-protein transferase, C-terminal domain"/>
    <property type="match status" value="1"/>
</dbReference>
<dbReference type="Gene3D" id="3.30.70.3550">
    <property type="entry name" value="Leucyl/phenylalanyl-tRNA-protein transferase, N-terminal domain"/>
    <property type="match status" value="1"/>
</dbReference>
<dbReference type="HAMAP" id="MF_00688">
    <property type="entry name" value="Leu_Phe_trans"/>
    <property type="match status" value="1"/>
</dbReference>
<dbReference type="InterPro" id="IPR016181">
    <property type="entry name" value="Acyl_CoA_acyltransferase"/>
</dbReference>
<dbReference type="InterPro" id="IPR004616">
    <property type="entry name" value="Leu/Phe-tRNA_Trfase"/>
</dbReference>
<dbReference type="InterPro" id="IPR042203">
    <property type="entry name" value="Leu/Phe-tRNA_Trfase_C"/>
</dbReference>
<dbReference type="InterPro" id="IPR042221">
    <property type="entry name" value="Leu/Phe-tRNA_Trfase_N"/>
</dbReference>
<dbReference type="NCBIfam" id="TIGR00667">
    <property type="entry name" value="aat"/>
    <property type="match status" value="1"/>
</dbReference>
<dbReference type="PANTHER" id="PTHR30098">
    <property type="entry name" value="LEUCYL/PHENYLALANYL-TRNA--PROTEIN TRANSFERASE"/>
    <property type="match status" value="1"/>
</dbReference>
<dbReference type="PANTHER" id="PTHR30098:SF2">
    <property type="entry name" value="LEUCYL_PHENYLALANYL-TRNA--PROTEIN TRANSFERASE"/>
    <property type="match status" value="1"/>
</dbReference>
<dbReference type="Pfam" id="PF03588">
    <property type="entry name" value="Leu_Phe_trans"/>
    <property type="match status" value="1"/>
</dbReference>
<dbReference type="SUPFAM" id="SSF55729">
    <property type="entry name" value="Acyl-CoA N-acyltransferases (Nat)"/>
    <property type="match status" value="1"/>
</dbReference>
<reference key="1">
    <citation type="journal article" date="2010" name="Appl. Environ. Microbiol.">
        <title>The genome sequence of Psychrobacter arcticus 273-4, a psychroactive Siberian permafrost bacterium, reveals mechanisms for adaptation to low-temperature growth.</title>
        <authorList>
            <person name="Ayala-del-Rio H.L."/>
            <person name="Chain P.S."/>
            <person name="Grzymski J.J."/>
            <person name="Ponder M.A."/>
            <person name="Ivanova N."/>
            <person name="Bergholz P.W."/>
            <person name="Di Bartolo G."/>
            <person name="Hauser L."/>
            <person name="Land M."/>
            <person name="Bakermans C."/>
            <person name="Rodrigues D."/>
            <person name="Klappenbach J."/>
            <person name="Zarka D."/>
            <person name="Larimer F."/>
            <person name="Richardson P."/>
            <person name="Murray A."/>
            <person name="Thomashow M."/>
            <person name="Tiedje J.M."/>
        </authorList>
    </citation>
    <scope>NUCLEOTIDE SEQUENCE [LARGE SCALE GENOMIC DNA]</scope>
    <source>
        <strain>DSM 17307 / VKM B-2377 / 273-4</strain>
    </source>
</reference>